<organism evidence="9">
    <name type="scientific">Schwanniomyces occidentalis</name>
    <name type="common">Yeast</name>
    <name type="synonym">Debaryomyces occidentalis</name>
    <dbReference type="NCBI Taxonomy" id="27300"/>
    <lineage>
        <taxon>Eukaryota</taxon>
        <taxon>Fungi</taxon>
        <taxon>Dikarya</taxon>
        <taxon>Ascomycota</taxon>
        <taxon>Saccharomycotina</taxon>
        <taxon>Pichiomycetes</taxon>
        <taxon>Debaryomycetaceae</taxon>
        <taxon>Schwanniomyces</taxon>
    </lineage>
</organism>
<comment type="function">
    <text evidence="3 5">Catalyzes the hydrolysis of ATP coupled with the export of sodium and potassium from the cell (PubMed:9430707). May be an inefficient potassium exporter (PubMed:9430707). May transport other cations such as lithium (By similarity). Sodium/potassium efflux ATPases are involved in salt tolerance and maintaining the membrane potential across the plasma membrane in high salinity (Na+) or alkaline (K+) environments (PubMed:9430707).</text>
</comment>
<comment type="catalytic activity">
    <reaction evidence="8">
        <text>Na(+)(in) + ATP + H2O = Na(+)(out) + ADP + phosphate + H(+)</text>
        <dbReference type="Rhea" id="RHEA:14633"/>
        <dbReference type="ChEBI" id="CHEBI:15377"/>
        <dbReference type="ChEBI" id="CHEBI:15378"/>
        <dbReference type="ChEBI" id="CHEBI:29101"/>
        <dbReference type="ChEBI" id="CHEBI:30616"/>
        <dbReference type="ChEBI" id="CHEBI:43474"/>
        <dbReference type="ChEBI" id="CHEBI:456216"/>
        <dbReference type="EC" id="7.2.2.3"/>
    </reaction>
    <physiologicalReaction direction="left-to-right" evidence="8">
        <dbReference type="Rhea" id="RHEA:14634"/>
    </physiologicalReaction>
</comment>
<comment type="catalytic activity">
    <reaction evidence="1">
        <text>K(+)(in) + ATP + H2O = K(+)(out) + ADP + phosphate + H(+)</text>
        <dbReference type="Rhea" id="RHEA:75815"/>
        <dbReference type="ChEBI" id="CHEBI:15377"/>
        <dbReference type="ChEBI" id="CHEBI:15378"/>
        <dbReference type="ChEBI" id="CHEBI:29103"/>
        <dbReference type="ChEBI" id="CHEBI:30616"/>
        <dbReference type="ChEBI" id="CHEBI:43474"/>
        <dbReference type="ChEBI" id="CHEBI:456216"/>
    </reaction>
</comment>
<comment type="cofactor">
    <cofactor evidence="2">
        <name>Mg(2+)</name>
        <dbReference type="ChEBI" id="CHEBI:18420"/>
    </cofactor>
</comment>
<comment type="subcellular location">
    <subcellularLocation>
        <location evidence="8">Cell membrane</location>
        <topology evidence="4">Multi-pass membrane protein</topology>
    </subcellularLocation>
</comment>
<comment type="induction">
    <text evidence="5">Induced by a combination of high pH and sodium ions.</text>
</comment>
<comment type="PTM">
    <text evidence="3">The active site is phosphorylated in presence of sodium or potassium and in conditions of higher pH. Not phosphorylated in presence of calcium ions.</text>
</comment>
<comment type="disruption phenotype">
    <text evidence="5">Reduces sodium efflux from cells (PubMed:9430707). The rate of potassium efflux from the cell appears normal (PubMed:9430707).</text>
</comment>
<comment type="similarity">
    <text evidence="7">Belongs to the cation transport ATPase (P-type) (TC 3.A.3) family. Type IID subfamily.</text>
</comment>
<dbReference type="EC" id="7.2.2.3" evidence="8"/>
<dbReference type="EMBL" id="AF030860">
    <property type="protein sequence ID" value="AAB86426.1"/>
    <property type="molecule type" value="Genomic_DNA"/>
</dbReference>
<dbReference type="PIR" id="T31111">
    <property type="entry name" value="T31111"/>
</dbReference>
<dbReference type="SMR" id="O13397"/>
<dbReference type="GO" id="GO:0005886">
    <property type="term" value="C:plasma membrane"/>
    <property type="evidence" value="ECO:0000314"/>
    <property type="project" value="UniProtKB"/>
</dbReference>
<dbReference type="GO" id="GO:0005524">
    <property type="term" value="F:ATP binding"/>
    <property type="evidence" value="ECO:0007669"/>
    <property type="project" value="UniProtKB-KW"/>
</dbReference>
<dbReference type="GO" id="GO:0016887">
    <property type="term" value="F:ATP hydrolysis activity"/>
    <property type="evidence" value="ECO:0007669"/>
    <property type="project" value="InterPro"/>
</dbReference>
<dbReference type="GO" id="GO:0046872">
    <property type="term" value="F:metal ion binding"/>
    <property type="evidence" value="ECO:0007669"/>
    <property type="project" value="UniProtKB-KW"/>
</dbReference>
<dbReference type="GO" id="GO:0008554">
    <property type="term" value="F:P-type sodium transporter activity"/>
    <property type="evidence" value="ECO:0000315"/>
    <property type="project" value="UniProtKB"/>
</dbReference>
<dbReference type="GO" id="GO:0006883">
    <property type="term" value="P:intracellular sodium ion homeostasis"/>
    <property type="evidence" value="ECO:0000315"/>
    <property type="project" value="UniProtKB"/>
</dbReference>
<dbReference type="GO" id="GO:0006813">
    <property type="term" value="P:potassium ion transport"/>
    <property type="evidence" value="ECO:0007669"/>
    <property type="project" value="UniProtKB-KW"/>
</dbReference>
<dbReference type="GO" id="GO:0036376">
    <property type="term" value="P:sodium ion export across plasma membrane"/>
    <property type="evidence" value="ECO:0000315"/>
    <property type="project" value="UniProtKB"/>
</dbReference>
<dbReference type="FunFam" id="2.70.150.10:FF:000016">
    <property type="entry name" value="Calcium-transporting P-type ATPase putative"/>
    <property type="match status" value="1"/>
</dbReference>
<dbReference type="FunFam" id="1.20.1110.10:FF:000015">
    <property type="entry name" value="Sodium ion P-type ATPase"/>
    <property type="match status" value="1"/>
</dbReference>
<dbReference type="FunFam" id="3.40.1110.10:FF:000039">
    <property type="entry name" value="Sodium P-type ATPase"/>
    <property type="match status" value="1"/>
</dbReference>
<dbReference type="FunFam" id="3.40.50.1000:FF:000047">
    <property type="entry name" value="Sodium P-type ATPase"/>
    <property type="match status" value="1"/>
</dbReference>
<dbReference type="Gene3D" id="3.40.1110.10">
    <property type="entry name" value="Calcium-transporting ATPase, cytoplasmic domain N"/>
    <property type="match status" value="1"/>
</dbReference>
<dbReference type="Gene3D" id="2.70.150.10">
    <property type="entry name" value="Calcium-transporting ATPase, cytoplasmic transduction domain A"/>
    <property type="match status" value="1"/>
</dbReference>
<dbReference type="Gene3D" id="1.20.1110.10">
    <property type="entry name" value="Calcium-transporting ATPase, transmembrane domain"/>
    <property type="match status" value="2"/>
</dbReference>
<dbReference type="Gene3D" id="3.40.50.1000">
    <property type="entry name" value="HAD superfamily/HAD-like"/>
    <property type="match status" value="1"/>
</dbReference>
<dbReference type="InterPro" id="IPR006068">
    <property type="entry name" value="ATPase_P-typ_cation-transptr_C"/>
</dbReference>
<dbReference type="InterPro" id="IPR004014">
    <property type="entry name" value="ATPase_P-typ_cation-transptr_N"/>
</dbReference>
<dbReference type="InterPro" id="IPR023299">
    <property type="entry name" value="ATPase_P-typ_cyto_dom_N"/>
</dbReference>
<dbReference type="InterPro" id="IPR018303">
    <property type="entry name" value="ATPase_P-typ_P_site"/>
</dbReference>
<dbReference type="InterPro" id="IPR023298">
    <property type="entry name" value="ATPase_P-typ_TM_dom_sf"/>
</dbReference>
<dbReference type="InterPro" id="IPR008250">
    <property type="entry name" value="ATPase_P-typ_transduc_dom_A_sf"/>
</dbReference>
<dbReference type="InterPro" id="IPR036412">
    <property type="entry name" value="HAD-like_sf"/>
</dbReference>
<dbReference type="InterPro" id="IPR023214">
    <property type="entry name" value="HAD_sf"/>
</dbReference>
<dbReference type="InterPro" id="IPR006414">
    <property type="entry name" value="P-type_ATPase_IID"/>
</dbReference>
<dbReference type="InterPro" id="IPR001757">
    <property type="entry name" value="P_typ_ATPase"/>
</dbReference>
<dbReference type="InterPro" id="IPR044492">
    <property type="entry name" value="P_typ_ATPase_HD_dom"/>
</dbReference>
<dbReference type="NCBIfam" id="TIGR01523">
    <property type="entry name" value="ATPase-IID_K-Na"/>
    <property type="match status" value="1"/>
</dbReference>
<dbReference type="NCBIfam" id="TIGR01494">
    <property type="entry name" value="ATPase_P-type"/>
    <property type="match status" value="3"/>
</dbReference>
<dbReference type="PANTHER" id="PTHR42861">
    <property type="entry name" value="CALCIUM-TRANSPORTING ATPASE"/>
    <property type="match status" value="1"/>
</dbReference>
<dbReference type="Pfam" id="PF13246">
    <property type="entry name" value="Cation_ATPase"/>
    <property type="match status" value="1"/>
</dbReference>
<dbReference type="Pfam" id="PF00689">
    <property type="entry name" value="Cation_ATPase_C"/>
    <property type="match status" value="1"/>
</dbReference>
<dbReference type="Pfam" id="PF00690">
    <property type="entry name" value="Cation_ATPase_N"/>
    <property type="match status" value="1"/>
</dbReference>
<dbReference type="Pfam" id="PF00122">
    <property type="entry name" value="E1-E2_ATPase"/>
    <property type="match status" value="1"/>
</dbReference>
<dbReference type="Pfam" id="PF00702">
    <property type="entry name" value="Hydrolase"/>
    <property type="match status" value="1"/>
</dbReference>
<dbReference type="PRINTS" id="PR00119">
    <property type="entry name" value="CATATPASE"/>
</dbReference>
<dbReference type="SFLD" id="SFLDG00002">
    <property type="entry name" value="C1.7:_P-type_atpase_like"/>
    <property type="match status" value="1"/>
</dbReference>
<dbReference type="SFLD" id="SFLDF00027">
    <property type="entry name" value="p-type_atpase"/>
    <property type="match status" value="1"/>
</dbReference>
<dbReference type="SMART" id="SM00831">
    <property type="entry name" value="Cation_ATPase_N"/>
    <property type="match status" value="1"/>
</dbReference>
<dbReference type="SUPFAM" id="SSF81653">
    <property type="entry name" value="Calcium ATPase, transduction domain A"/>
    <property type="match status" value="1"/>
</dbReference>
<dbReference type="SUPFAM" id="SSF81665">
    <property type="entry name" value="Calcium ATPase, transmembrane domain M"/>
    <property type="match status" value="1"/>
</dbReference>
<dbReference type="SUPFAM" id="SSF56784">
    <property type="entry name" value="HAD-like"/>
    <property type="match status" value="1"/>
</dbReference>
<dbReference type="SUPFAM" id="SSF81660">
    <property type="entry name" value="Metal cation-transporting ATPase, ATP-binding domain N"/>
    <property type="match status" value="1"/>
</dbReference>
<dbReference type="PROSITE" id="PS00154">
    <property type="entry name" value="ATPASE_E1_E2"/>
    <property type="match status" value="1"/>
</dbReference>
<accession>O13397</accession>
<feature type="chain" id="PRO_0000458051" description="Sodium/potassium exporting P-type ATPase 1">
    <location>
        <begin position="1"/>
        <end position="1055"/>
    </location>
</feature>
<feature type="topological domain" description="Cytoplasmic" evidence="7">
    <location>
        <begin position="1"/>
        <end position="73"/>
    </location>
</feature>
<feature type="transmembrane region" description="Helical" evidence="4">
    <location>
        <begin position="74"/>
        <end position="94"/>
    </location>
</feature>
<feature type="topological domain" description="Extracellular" evidence="7">
    <location>
        <begin position="95"/>
        <end position="99"/>
    </location>
</feature>
<feature type="transmembrane region" description="Helical" evidence="4">
    <location>
        <begin position="100"/>
        <end position="120"/>
    </location>
</feature>
<feature type="topological domain" description="Cytoplasmic" evidence="7">
    <location>
        <begin position="121"/>
        <end position="298"/>
    </location>
</feature>
<feature type="transmembrane region" description="Helical" evidence="4">
    <location>
        <begin position="299"/>
        <end position="319"/>
    </location>
</feature>
<feature type="topological domain" description="Extracellular" evidence="7">
    <location>
        <begin position="320"/>
        <end position="328"/>
    </location>
</feature>
<feature type="transmembrane region" description="Helical" evidence="4">
    <location>
        <begin position="329"/>
        <end position="349"/>
    </location>
</feature>
<feature type="topological domain" description="Cytoplasmic" evidence="7">
    <location>
        <begin position="350"/>
        <end position="789"/>
    </location>
</feature>
<feature type="transmembrane region" description="Helical" evidence="4">
    <location>
        <begin position="790"/>
        <end position="810"/>
    </location>
</feature>
<feature type="topological domain" description="Extracellular" evidence="7">
    <location>
        <begin position="811"/>
        <end position="816"/>
    </location>
</feature>
<feature type="transmembrane region" description="Helical" evidence="4">
    <location>
        <begin position="817"/>
        <end position="837"/>
    </location>
</feature>
<feature type="topological domain" description="Cytoplasmic" evidence="7">
    <location>
        <begin position="838"/>
        <end position="866"/>
    </location>
</feature>
<feature type="transmembrane region" description="Helical" evidence="4">
    <location>
        <begin position="867"/>
        <end position="887"/>
    </location>
</feature>
<feature type="topological domain" description="Extracellular" evidence="7">
    <location>
        <begin position="888"/>
        <end position="913"/>
    </location>
</feature>
<feature type="transmembrane region" description="Helical" evidence="4">
    <location>
        <begin position="914"/>
        <end position="934"/>
    </location>
</feature>
<feature type="topological domain" description="Cytoplasmic" evidence="7">
    <location>
        <begin position="935"/>
        <end position="962"/>
    </location>
</feature>
<feature type="transmembrane region" description="Helical" evidence="4">
    <location>
        <begin position="963"/>
        <end position="983"/>
    </location>
</feature>
<feature type="topological domain" description="Extracellular" evidence="7">
    <location>
        <begin position="984"/>
        <end position="990"/>
    </location>
</feature>
<feature type="transmembrane region" description="Helical" evidence="4">
    <location>
        <begin position="991"/>
        <end position="1011"/>
    </location>
</feature>
<feature type="topological domain" description="Cytoplasmic" evidence="7">
    <location>
        <begin position="1012"/>
        <end position="1055"/>
    </location>
</feature>
<feature type="active site" description="4-aspartylphosphate intermediate" evidence="2">
    <location>
        <position position="385"/>
    </location>
</feature>
<feature type="binding site" evidence="2">
    <location>
        <position position="385"/>
    </location>
    <ligand>
        <name>Mg(2+)</name>
        <dbReference type="ChEBI" id="CHEBI:18420"/>
    </ligand>
</feature>
<feature type="binding site" evidence="2">
    <location>
        <position position="387"/>
    </location>
    <ligand>
        <name>ATP</name>
        <dbReference type="ChEBI" id="CHEBI:30616"/>
    </ligand>
</feature>
<feature type="binding site" evidence="2">
    <location>
        <position position="387"/>
    </location>
    <ligand>
        <name>Mg(2+)</name>
        <dbReference type="ChEBI" id="CHEBI:18420"/>
    </ligand>
</feature>
<feature type="binding site" evidence="2">
    <location>
        <position position="491"/>
    </location>
    <ligand>
        <name>ATP</name>
        <dbReference type="ChEBI" id="CHEBI:30616"/>
    </ligand>
</feature>
<feature type="binding site" evidence="2">
    <location>
        <position position="544"/>
    </location>
    <ligand>
        <name>ATP</name>
        <dbReference type="ChEBI" id="CHEBI:30616"/>
    </ligand>
</feature>
<feature type="binding site" evidence="2">
    <location>
        <position position="586"/>
    </location>
    <ligand>
        <name>ATP</name>
        <dbReference type="ChEBI" id="CHEBI:30616"/>
    </ligand>
</feature>
<feature type="binding site" evidence="2">
    <location>
        <position position="646"/>
    </location>
    <ligand>
        <name>ATP</name>
        <dbReference type="ChEBI" id="CHEBI:30616"/>
    </ligand>
</feature>
<feature type="binding site" evidence="2">
    <location>
        <position position="647"/>
    </location>
    <ligand>
        <name>ATP</name>
        <dbReference type="ChEBI" id="CHEBI:30616"/>
    </ligand>
</feature>
<feature type="binding site" evidence="2">
    <location>
        <position position="648"/>
    </location>
    <ligand>
        <name>ATP</name>
        <dbReference type="ChEBI" id="CHEBI:30616"/>
    </ligand>
</feature>
<feature type="binding site" evidence="2">
    <location>
        <position position="705"/>
    </location>
    <ligand>
        <name>ATP</name>
        <dbReference type="ChEBI" id="CHEBI:30616"/>
    </ligand>
</feature>
<feature type="binding site" evidence="2">
    <location>
        <position position="711"/>
    </location>
    <ligand>
        <name>ATP</name>
        <dbReference type="ChEBI" id="CHEBI:30616"/>
    </ligand>
</feature>
<feature type="binding site" evidence="2">
    <location>
        <position position="730"/>
    </location>
    <ligand>
        <name>Mg(2+)</name>
        <dbReference type="ChEBI" id="CHEBI:18420"/>
    </ligand>
</feature>
<feature type="binding site" evidence="2">
    <location>
        <position position="733"/>
    </location>
    <ligand>
        <name>ATP</name>
        <dbReference type="ChEBI" id="CHEBI:30616"/>
    </ligand>
</feature>
<gene>
    <name evidence="6" type="primary">ENA1</name>
</gene>
<sequence>MTPSIGYVDEDENGQKSKFLRSSDDPYRLSIEEVIEKFETHLENGLSDEQAKSKLAKVGLNNLGADEKISISKILAHQIFNAMVLVLIISLIIALAIKDWISGGVIGFVVFINIFVGFIQELKAEKTMGSLRSLSSPMARALRNGVDSNINAEEVVPGDIIHIKVGDTIPADLRLVDCMNLETDEALLTGESLPVAKDHEEIYDYGAPIPVGDRLNMAFSSSIVAKGRGTGIVVATGLDTEIGKIAKSLKNNDDAVVVKVDKSLNPSTKDYLIAVIKTTKNIIFNVLGTNVGTPLQRKLSWLAILLFWVAVLFAIVVMASQEMRVNRNVAIYAICVALSMIPSSLVVVLTITMAIGAQVMVTKNVIVRKLDSLEALGGINDICSDKTGTLTMGKMIARKVWIPNVGSYLVQNSNEPFNPTVGDISFNENSPKFIKETDDELDFIPHLPSPTPILFEKWLHIATLANIASLNQIQNEMDGSIEWEAHGDATEIAINVFTTRLGYTRDKLIGDSLEHLNEFPFDSSIKRMSTVYKDKDGNSTVYTKGAVERVLSCCKYWYNPELTALSEEDKLLIESNMNALSSEGLRVLAFAQREINISKENVSNREVVESNLIFLGLIGIYDPPRPESAKSVKLCHKAGINVHMLTGDHPGTAKAIAQEVGILPHNLYHYREEVVKVMVMIANEFDSLSDDEIDNLPVLPLVIARCAPQTKVRMIEALHRRGKFVAMTGDGVNDSPSLKKADVGIAMGLNGSDVAKDASDIVLTDDNFASILNAIEEGRRMSSNIQKFVLQLLAENVAQALYLMIGLAFIDKSGYSVFPLSPVEVLWIIVVTSCFPAMGLGQEKASHDILEQPPNATIFTWEVIIDMIAYGFWMAVCCLVCFVCIVYGKGDGSLGENCNEGSDTGCNLVFRGRSGAFAAFTWCALLLAWECIHLRLSFFKMRPELENPWWKQLAIDLWDNQFLFWSVMGAIVSVFPVVYIPVINNKVFLHAPIGYEWGLAVAFTILFLIGAEGWKWFKRVYYRKSNANNPEYDLERNDPFKEYSSFSKSNTMEIV</sequence>
<reference evidence="9" key="1">
    <citation type="journal article" date="1998" name="J. Biol. Chem.">
        <title>P-type ATPases mediate sodium and potassium effluxes in Schwanniomyces occidentalis.</title>
        <authorList>
            <person name="Banuelos M.A."/>
            <person name="Rodriguez-Navarro A."/>
        </authorList>
    </citation>
    <scope>NUCLEOTIDE SEQUENCE [GENOMIC DNA]</scope>
    <scope>FUNCTION</scope>
    <scope>CATALYTIC ACTIVITY</scope>
    <scope>SUBCELLULAR LOCATION</scope>
    <scope>INDUCTION</scope>
    <scope>DISRUPTION PHENOTYPE</scope>
</reference>
<protein>
    <recommendedName>
        <fullName evidence="7">Sodium/potassium exporting P-type ATPase 1</fullName>
        <ecNumber evidence="8">7.2.2.3</ecNumber>
    </recommendedName>
</protein>
<proteinExistence type="evidence at protein level"/>
<name>ATN1_SCHOC</name>
<keyword id="KW-0067">ATP-binding</keyword>
<keyword id="KW-1003">Cell membrane</keyword>
<keyword id="KW-0406">Ion transport</keyword>
<keyword id="KW-0460">Magnesium</keyword>
<keyword id="KW-0472">Membrane</keyword>
<keyword id="KW-0479">Metal-binding</keyword>
<keyword id="KW-0547">Nucleotide-binding</keyword>
<keyword id="KW-0630">Potassium</keyword>
<keyword id="KW-0633">Potassium transport</keyword>
<keyword id="KW-0915">Sodium</keyword>
<keyword id="KW-0739">Sodium transport</keyword>
<keyword id="KW-1278">Translocase</keyword>
<keyword id="KW-0812">Transmembrane</keyword>
<keyword id="KW-1133">Transmembrane helix</keyword>
<keyword id="KW-0813">Transport</keyword>
<evidence type="ECO:0000250" key="1">
    <source>
        <dbReference type="UniProtKB" id="O13398"/>
    </source>
</evidence>
<evidence type="ECO:0000250" key="2">
    <source>
        <dbReference type="UniProtKB" id="P04191"/>
    </source>
</evidence>
<evidence type="ECO:0000250" key="3">
    <source>
        <dbReference type="UniProtKB" id="P13587"/>
    </source>
</evidence>
<evidence type="ECO:0000255" key="4"/>
<evidence type="ECO:0000269" key="5">
    <source>
    </source>
</evidence>
<evidence type="ECO:0000303" key="6">
    <source>
    </source>
</evidence>
<evidence type="ECO:0000305" key="7"/>
<evidence type="ECO:0000305" key="8">
    <source>
    </source>
</evidence>
<evidence type="ECO:0000312" key="9">
    <source>
        <dbReference type="EMBL" id="AAB86426.1"/>
    </source>
</evidence>